<accession>P23527</accession>
<accession>Q3KPI7</accession>
<accession>Q8TCV6</accession>
<reference key="1">
    <citation type="journal article" date="1991" name="DNA Seq.">
        <title>A novel divergently transcribed human histone H2A/H2B gene pair.</title>
        <authorList>
            <person name="Dobner T."/>
            <person name="Wolf I."/>
            <person name="Mai B."/>
            <person name="Lipp M."/>
        </authorList>
    </citation>
    <scope>NUCLEOTIDE SEQUENCE [GENOMIC DNA]</scope>
</reference>
<reference key="2">
    <citation type="journal article" date="2002" name="Genomics">
        <title>The human and mouse replication-dependent histone genes.</title>
        <authorList>
            <person name="Marzluff W.F."/>
            <person name="Gongidi P."/>
            <person name="Woods K.R."/>
            <person name="Jin J."/>
            <person name="Maltais L.J."/>
        </authorList>
    </citation>
    <scope>NUCLEOTIDE SEQUENCE [GENOMIC DNA]</scope>
</reference>
<reference key="3">
    <citation type="journal article" date="2003" name="Nature">
        <title>The DNA sequence and analysis of human chromosome 6.</title>
        <authorList>
            <person name="Mungall A.J."/>
            <person name="Palmer S.A."/>
            <person name="Sims S.K."/>
            <person name="Edwards C.A."/>
            <person name="Ashurst J.L."/>
            <person name="Wilming L."/>
            <person name="Jones M.C."/>
            <person name="Horton R."/>
            <person name="Hunt S.E."/>
            <person name="Scott C.E."/>
            <person name="Gilbert J.G.R."/>
            <person name="Clamp M.E."/>
            <person name="Bethel G."/>
            <person name="Milne S."/>
            <person name="Ainscough R."/>
            <person name="Almeida J.P."/>
            <person name="Ambrose K.D."/>
            <person name="Andrews T.D."/>
            <person name="Ashwell R.I.S."/>
            <person name="Babbage A.K."/>
            <person name="Bagguley C.L."/>
            <person name="Bailey J."/>
            <person name="Banerjee R."/>
            <person name="Barker D.J."/>
            <person name="Barlow K.F."/>
            <person name="Bates K."/>
            <person name="Beare D.M."/>
            <person name="Beasley H."/>
            <person name="Beasley O."/>
            <person name="Bird C.P."/>
            <person name="Blakey S.E."/>
            <person name="Bray-Allen S."/>
            <person name="Brook J."/>
            <person name="Brown A.J."/>
            <person name="Brown J.Y."/>
            <person name="Burford D.C."/>
            <person name="Burrill W."/>
            <person name="Burton J."/>
            <person name="Carder C."/>
            <person name="Carter N.P."/>
            <person name="Chapman J.C."/>
            <person name="Clark S.Y."/>
            <person name="Clark G."/>
            <person name="Clee C.M."/>
            <person name="Clegg S."/>
            <person name="Cobley V."/>
            <person name="Collier R.E."/>
            <person name="Collins J.E."/>
            <person name="Colman L.K."/>
            <person name="Corby N.R."/>
            <person name="Coville G.J."/>
            <person name="Culley K.M."/>
            <person name="Dhami P."/>
            <person name="Davies J."/>
            <person name="Dunn M."/>
            <person name="Earthrowl M.E."/>
            <person name="Ellington A.E."/>
            <person name="Evans K.A."/>
            <person name="Faulkner L."/>
            <person name="Francis M.D."/>
            <person name="Frankish A."/>
            <person name="Frankland J."/>
            <person name="French L."/>
            <person name="Garner P."/>
            <person name="Garnett J."/>
            <person name="Ghori M.J."/>
            <person name="Gilby L.M."/>
            <person name="Gillson C.J."/>
            <person name="Glithero R.J."/>
            <person name="Grafham D.V."/>
            <person name="Grant M."/>
            <person name="Gribble S."/>
            <person name="Griffiths C."/>
            <person name="Griffiths M.N.D."/>
            <person name="Hall R."/>
            <person name="Halls K.S."/>
            <person name="Hammond S."/>
            <person name="Harley J.L."/>
            <person name="Hart E.A."/>
            <person name="Heath P.D."/>
            <person name="Heathcott R."/>
            <person name="Holmes S.J."/>
            <person name="Howden P.J."/>
            <person name="Howe K.L."/>
            <person name="Howell G.R."/>
            <person name="Huckle E."/>
            <person name="Humphray S.J."/>
            <person name="Humphries M.D."/>
            <person name="Hunt A.R."/>
            <person name="Johnson C.M."/>
            <person name="Joy A.A."/>
            <person name="Kay M."/>
            <person name="Keenan S.J."/>
            <person name="Kimberley A.M."/>
            <person name="King A."/>
            <person name="Laird G.K."/>
            <person name="Langford C."/>
            <person name="Lawlor S."/>
            <person name="Leongamornlert D.A."/>
            <person name="Leversha M."/>
            <person name="Lloyd C.R."/>
            <person name="Lloyd D.M."/>
            <person name="Loveland J.E."/>
            <person name="Lovell J."/>
            <person name="Martin S."/>
            <person name="Mashreghi-Mohammadi M."/>
            <person name="Maslen G.L."/>
            <person name="Matthews L."/>
            <person name="McCann O.T."/>
            <person name="McLaren S.J."/>
            <person name="McLay K."/>
            <person name="McMurray A."/>
            <person name="Moore M.J.F."/>
            <person name="Mullikin J.C."/>
            <person name="Niblett D."/>
            <person name="Nickerson T."/>
            <person name="Novik K.L."/>
            <person name="Oliver K."/>
            <person name="Overton-Larty E.K."/>
            <person name="Parker A."/>
            <person name="Patel R."/>
            <person name="Pearce A.V."/>
            <person name="Peck A.I."/>
            <person name="Phillimore B.J.C.T."/>
            <person name="Phillips S."/>
            <person name="Plumb R.W."/>
            <person name="Porter K.M."/>
            <person name="Ramsey Y."/>
            <person name="Ranby S.A."/>
            <person name="Rice C.M."/>
            <person name="Ross M.T."/>
            <person name="Searle S.M."/>
            <person name="Sehra H.K."/>
            <person name="Sheridan E."/>
            <person name="Skuce C.D."/>
            <person name="Smith S."/>
            <person name="Smith M."/>
            <person name="Spraggon L."/>
            <person name="Squares S.L."/>
            <person name="Steward C.A."/>
            <person name="Sycamore N."/>
            <person name="Tamlyn-Hall G."/>
            <person name="Tester J."/>
            <person name="Theaker A.J."/>
            <person name="Thomas D.W."/>
            <person name="Thorpe A."/>
            <person name="Tracey A."/>
            <person name="Tromans A."/>
            <person name="Tubby B."/>
            <person name="Wall M."/>
            <person name="Wallis J.M."/>
            <person name="West A.P."/>
            <person name="White S.S."/>
            <person name="Whitehead S.L."/>
            <person name="Whittaker H."/>
            <person name="Wild A."/>
            <person name="Willey D.J."/>
            <person name="Wilmer T.E."/>
            <person name="Wood J.M."/>
            <person name="Wray P.W."/>
            <person name="Wyatt J.C."/>
            <person name="Young L."/>
            <person name="Younger R.M."/>
            <person name="Bentley D.R."/>
            <person name="Coulson A."/>
            <person name="Durbin R.M."/>
            <person name="Hubbard T."/>
            <person name="Sulston J.E."/>
            <person name="Dunham I."/>
            <person name="Rogers J."/>
            <person name="Beck S."/>
        </authorList>
    </citation>
    <scope>NUCLEOTIDE SEQUENCE [LARGE SCALE GENOMIC DNA]</scope>
</reference>
<reference key="4">
    <citation type="journal article" date="2004" name="Genome Res.">
        <title>The status, quality, and expansion of the NIH full-length cDNA project: the Mammalian Gene Collection (MGC).</title>
        <authorList>
            <consortium name="The MGC Project Team"/>
        </authorList>
    </citation>
    <scope>NUCLEOTIDE SEQUENCE [LARGE SCALE MRNA]</scope>
</reference>
<reference key="5">
    <citation type="submission" date="2010-01" db="UniProtKB">
        <authorList>
            <person name="Bienvenut W.V."/>
            <person name="Fleming J."/>
            <person name="Leug H.Y."/>
        </authorList>
    </citation>
    <scope>PROTEIN SEQUENCE OF 2-12; 35-47; 59-73 AND 110-126</scope>
    <scope>CLEAVAGE OF INITIATOR METHIONINE</scope>
    <scope>ACETYLATION AT PRO-2</scope>
    <scope>IDENTIFICATION BY MASS SPECTROMETRY</scope>
    <source>
        <tissue>Hepatoma</tissue>
    </source>
</reference>
<reference key="6">
    <citation type="journal article" date="2006" name="Mol. Cell. Proteomics">
        <title>Quantitative proteomic analysis of post-translational modifications of human histones.</title>
        <authorList>
            <person name="Beck H.C."/>
            <person name="Nielsen E.C."/>
            <person name="Matthiesen R."/>
            <person name="Jensen L.H."/>
            <person name="Sehested M."/>
            <person name="Finn P."/>
            <person name="Grauslund M."/>
            <person name="Hansen A.M."/>
            <person name="Jensen O.N."/>
        </authorList>
    </citation>
    <scope>PROTEIN SEQUENCE OF 7-24</scope>
    <scope>ACETYLATION AT LYS-6; LYS-12; LYS-13; LYS-16; LYS-17 AND LYS-21</scope>
    <scope>METHYLATION AT LYS-47; LYS-58 AND LYS-109</scope>
    <scope>UBIQUITINATION AT LYS-121</scope>
    <scope>IDENTIFICATION BY MASS SPECTROMETRY</scope>
</reference>
<reference key="7">
    <citation type="journal article" date="2003" name="Cell">
        <title>Apoptotic phosphorylation of histone H2B is mediated by mammalian sterile twenty kinase.</title>
        <authorList>
            <person name="Cheung W.L."/>
            <person name="Ajiro K."/>
            <person name="Samejima K."/>
            <person name="Kloc M."/>
            <person name="Cheung P."/>
            <person name="Mizzen C.A."/>
            <person name="Beeser A."/>
            <person name="Etkin L.D."/>
            <person name="Chernoff J."/>
            <person name="Earnshaw W.C."/>
            <person name="Allis C.D."/>
        </authorList>
    </citation>
    <scope>PHOSPHORYLATION AT SER-15</scope>
</reference>
<reference key="8">
    <citation type="journal article" date="2005" name="Mol. Cell">
        <title>Monoubiquitination of human histone H2B: the factors involved and their roles in HOX gene regulation.</title>
        <authorList>
            <person name="Zhu B."/>
            <person name="Zheng Y."/>
            <person name="Pham A.-D."/>
            <person name="Mandal S.S."/>
            <person name="Erdjument-Bromage H."/>
            <person name="Tempst P."/>
            <person name="Reinberg D."/>
        </authorList>
    </citation>
    <scope>UBIQUITINATION AT LYS-121</scope>
</reference>
<reference key="9">
    <citation type="journal article" date="2005" name="Mol. Cell. Biochem.">
        <title>Inhibition of core histones acetylation by carcinogenic nickel(II).</title>
        <authorList>
            <person name="Golebiowski F."/>
            <person name="Kasprzak K.S."/>
        </authorList>
    </citation>
    <scope>ACETYLATION AT LYS-6; LYS-13; LYS-16 AND LYS-21</scope>
</reference>
<reference key="10">
    <citation type="journal article" date="2006" name="Cell">
        <title>Histone H2B monoubiquitination functions cooperatively with FACT to regulate elongation by RNA polymerase II.</title>
        <authorList>
            <person name="Pavri R."/>
            <person name="Zhu B."/>
            <person name="Li G."/>
            <person name="Trojer P."/>
            <person name="Mandal S."/>
            <person name="Shilatifard A."/>
            <person name="Reinberg D."/>
        </authorList>
    </citation>
    <scope>UBIQUITINATION AT LYS-121</scope>
</reference>
<reference key="11">
    <citation type="journal article" date="2011" name="Cell">
        <title>Identification of 67 histone marks and histone lysine crotonylation as a new type of histone modification.</title>
        <authorList>
            <person name="Tan M."/>
            <person name="Luo H."/>
            <person name="Lee S."/>
            <person name="Jin F."/>
            <person name="Yang J.S."/>
            <person name="Montellier E."/>
            <person name="Buchou T."/>
            <person name="Cheng Z."/>
            <person name="Rousseaux S."/>
            <person name="Rajagopal N."/>
            <person name="Lu Z."/>
            <person name="Ye Z."/>
            <person name="Zhu Q."/>
            <person name="Wysocka J."/>
            <person name="Ye Y."/>
            <person name="Khochbin S."/>
            <person name="Ren B."/>
            <person name="Zhao Y."/>
        </authorList>
    </citation>
    <scope>CROTONYLATION AT LYS-6; LYS-12; LYS-13; LYS-16; LYS-17; LYS-21; LYS-24 AND LYS-35</scope>
</reference>
<reference key="12">
    <citation type="journal article" date="2011" name="Mol. Cell">
        <title>The RING finger protein MSL2 in the MOF complex is an E3 ubiquitin ligase for H2B K34 and is involved in crosstalk with H3 K4 and K79 methylation.</title>
        <authorList>
            <person name="Wu L."/>
            <person name="Zee B.M."/>
            <person name="Wang Y."/>
            <person name="Garcia B.A."/>
            <person name="Dou Y."/>
        </authorList>
    </citation>
    <scope>UBIQUITINATION AT LYS-35</scope>
</reference>
<reference key="13">
    <citation type="journal article" date="2012" name="Mol. Cell. Proteomics">
        <title>Lysine succinylation and lysine malonylation in histones.</title>
        <authorList>
            <person name="Xie Z."/>
            <person name="Dai J."/>
            <person name="Dai L."/>
            <person name="Tan M."/>
            <person name="Cheng Z."/>
            <person name="Wu Y."/>
            <person name="Boeke J.D."/>
            <person name="Zhao Y."/>
        </authorList>
    </citation>
    <scope>SUCCINYLATION AT LYS-35; LYS-117 AND LYS-121</scope>
    <scope>MALONYLATION AT LYS-117</scope>
</reference>
<reference key="14">
    <citation type="journal article" date="2013" name="Genes Dev.">
        <title>USP49 deubiquitinates histone H2B and regulates cotranscriptional pre-mRNA splicing.</title>
        <authorList>
            <person name="Zhang Z."/>
            <person name="Jones A."/>
            <person name="Joo H.Y."/>
            <person name="Zhou D."/>
            <person name="Cao Y."/>
            <person name="Chen S."/>
            <person name="Erdjument-Bromage H."/>
            <person name="Renfrow M."/>
            <person name="He H."/>
            <person name="Tempst P."/>
            <person name="Townes T.M."/>
            <person name="Giles K.E."/>
            <person name="Ma L."/>
            <person name="Wang H."/>
        </authorList>
    </citation>
    <scope>UBIQUITINATION</scope>
    <scope>DEUBIQUITINATION BY USP49</scope>
</reference>
<reference key="15">
    <citation type="journal article" date="2014" name="Nat. Chem. Biol.">
        <title>Lysine 2-hydroxyisobutyrylation is a widely distributed active histone mark.</title>
        <authorList>
            <person name="Dai L."/>
            <person name="Peng C."/>
            <person name="Montellier E."/>
            <person name="Lu Z."/>
            <person name="Chen Y."/>
            <person name="Ishii H."/>
            <person name="Debernardi A."/>
            <person name="Buchou T."/>
            <person name="Rousseaux S."/>
            <person name="Jin F."/>
            <person name="Sabari B.R."/>
            <person name="Deng Z."/>
            <person name="Allis C.D."/>
            <person name="Ren B."/>
            <person name="Khochbin S."/>
            <person name="Zhao Y."/>
        </authorList>
    </citation>
    <scope>HYDROXYBUTYRYLATION AT LYS-6; LYS-13; LYS-21; LYS-24; LYS-25; LYS-35; LYS-44; LYS-47; LYS-58; LYS-86; LYS-109; LYS-117 AND LYS-121</scope>
</reference>
<reference key="16">
    <citation type="journal article" date="2016" name="Mol. Cell">
        <title>Dynamic competing histone H4 K5K8 acetylation and butyrylation are hallmarks of highly active gene promoters.</title>
        <authorList>
            <person name="Goudarzi A."/>
            <person name="Zhang D."/>
            <person name="Huang H."/>
            <person name="Barral S."/>
            <person name="Kwon O.K."/>
            <person name="Qi S."/>
            <person name="Tang Z."/>
            <person name="Buchou T."/>
            <person name="Vitte A.L."/>
            <person name="He T."/>
            <person name="Cheng Z."/>
            <person name="Montellier E."/>
            <person name="Gaucher J."/>
            <person name="Curtet S."/>
            <person name="Debernardi A."/>
            <person name="Charbonnier G."/>
            <person name="Puthier D."/>
            <person name="Petosa C."/>
            <person name="Panne D."/>
            <person name="Rousseaux S."/>
            <person name="Roeder R.G."/>
            <person name="Zhao Y."/>
            <person name="Khochbin S."/>
        </authorList>
    </citation>
    <scope>BUTYRYLATION AT LYS-6 AND LYS-21</scope>
</reference>
<reference key="17">
    <citation type="journal article" date="2016" name="Mol. Cell">
        <title>Metabolic regulation of gene expression by histone lysine beta-hydroxybutyrylation.</title>
        <authorList>
            <person name="Xie Z."/>
            <person name="Zhang D."/>
            <person name="Chung D."/>
            <person name="Tang Z."/>
            <person name="Huang H."/>
            <person name="Dai L."/>
            <person name="Qi S."/>
            <person name="Li J."/>
            <person name="Colak G."/>
            <person name="Chen Y."/>
            <person name="Xia C."/>
            <person name="Peng C."/>
            <person name="Ruan H."/>
            <person name="Kirkey M."/>
            <person name="Wang D."/>
            <person name="Jensen L.M."/>
            <person name="Kwon O.K."/>
            <person name="Lee S."/>
            <person name="Pletcher S.D."/>
            <person name="Tan M."/>
            <person name="Lombard D.B."/>
            <person name="White K.P."/>
            <person name="Zhao H."/>
            <person name="Li J."/>
            <person name="Roeder R.G."/>
            <person name="Yang X."/>
            <person name="Zhao Y."/>
        </authorList>
    </citation>
    <scope>HYDROXYBUTYRYLATION AT LYS-6; LYS-12; LYS-17; LYS-21; LYS-35; LYS-86; LYS-117 AND LYS-121</scope>
</reference>
<reference key="18">
    <citation type="journal article" date="2019" name="Mol. Cell">
        <title>Glutarylation of histone H4 lysine 91 regulates chromatin dynamics.</title>
        <authorList>
            <person name="Bao X."/>
            <person name="Liu Z."/>
            <person name="Zhang W."/>
            <person name="Gladysz K."/>
            <person name="Fung Y.M.E."/>
            <person name="Tian G."/>
            <person name="Xiong Y."/>
            <person name="Wong J.W.H."/>
            <person name="Yuen K.W.Y."/>
            <person name="Li X.D."/>
        </authorList>
    </citation>
    <scope>GLUTARYLATION AT LYS-17; LYS-35; LYS-44; LYS-47; LYS-109; LYS-117 AND LYS-121</scope>
</reference>
<reference key="19">
    <citation type="journal article" date="2019" name="Nature">
        <title>Metabolic regulation of gene expression by histone lactylation.</title>
        <authorList>
            <person name="Zhang D."/>
            <person name="Tang Z."/>
            <person name="Huang H."/>
            <person name="Zhou G."/>
            <person name="Cui C."/>
            <person name="Weng Y."/>
            <person name="Liu W."/>
            <person name="Kim S."/>
            <person name="Lee S."/>
            <person name="Perez-Neut M."/>
            <person name="Ding J."/>
            <person name="Czyz D."/>
            <person name="Hu R."/>
            <person name="Ye Z."/>
            <person name="He M."/>
            <person name="Zheng Y.G."/>
            <person name="Shuman H.A."/>
            <person name="Dai L."/>
            <person name="Ren B."/>
            <person name="Roeder R.G."/>
            <person name="Becker L."/>
            <person name="Zhao Y."/>
        </authorList>
    </citation>
    <scope>LACTYLATION AT LYS-6; LYS-12; LYS-16; LYS-17; LYS-21; LYS-24; LYS-44; LYS-86; LYS-109; LYS-117 AND LYS-121</scope>
</reference>
<reference key="20">
    <citation type="journal article" date="2021" name="Elife">
        <title>Serine ADP-ribosylation marks nucleosomes for ALC1-dependent chromatin remodeling.</title>
        <authorList>
            <person name="Mohapatra J."/>
            <person name="Tashiro K."/>
            <person name="Beckner R.L."/>
            <person name="Sierra J."/>
            <person name="Kilgore J.A."/>
            <person name="Williams N.S."/>
            <person name="Liszczak G."/>
        </authorList>
    </citation>
    <scope>ADP-RIBOSYLATION AT SER-7</scope>
</reference>
<evidence type="ECO:0000250" key="1">
    <source>
        <dbReference type="UniProtKB" id="P33778"/>
    </source>
</evidence>
<evidence type="ECO:0000250" key="2">
    <source>
        <dbReference type="UniProtKB" id="P58876"/>
    </source>
</evidence>
<evidence type="ECO:0000250" key="3">
    <source>
        <dbReference type="UniProtKB" id="P62807"/>
    </source>
</evidence>
<evidence type="ECO:0000250" key="4">
    <source>
        <dbReference type="UniProtKB" id="Q00729"/>
    </source>
</evidence>
<evidence type="ECO:0000250" key="5">
    <source>
        <dbReference type="UniProtKB" id="Q5QNW6"/>
    </source>
</evidence>
<evidence type="ECO:0000250" key="6">
    <source>
        <dbReference type="UniProtKB" id="Q64475"/>
    </source>
</evidence>
<evidence type="ECO:0000250" key="7">
    <source>
        <dbReference type="UniProtKB" id="Q6ZWY9"/>
    </source>
</evidence>
<evidence type="ECO:0000250" key="8">
    <source>
        <dbReference type="UniProtKB" id="Q96A08"/>
    </source>
</evidence>
<evidence type="ECO:0000256" key="9">
    <source>
        <dbReference type="SAM" id="MobiDB-lite"/>
    </source>
</evidence>
<evidence type="ECO:0000269" key="10">
    <source>
    </source>
</evidence>
<evidence type="ECO:0000269" key="11">
    <source>
    </source>
</evidence>
<evidence type="ECO:0000269" key="12">
    <source>
    </source>
</evidence>
<evidence type="ECO:0000269" key="13">
    <source>
    </source>
</evidence>
<evidence type="ECO:0000269" key="14">
    <source>
    </source>
</evidence>
<evidence type="ECO:0000269" key="15">
    <source>
    </source>
</evidence>
<evidence type="ECO:0000269" key="16">
    <source>
    </source>
</evidence>
<evidence type="ECO:0000269" key="17">
    <source>
    </source>
</evidence>
<evidence type="ECO:0000269" key="18">
    <source>
    </source>
</evidence>
<evidence type="ECO:0000269" key="19">
    <source>
    </source>
</evidence>
<evidence type="ECO:0000269" key="20">
    <source>
    </source>
</evidence>
<evidence type="ECO:0000269" key="21">
    <source>
    </source>
</evidence>
<evidence type="ECO:0000269" key="22">
    <source>
    </source>
</evidence>
<evidence type="ECO:0000269" key="23">
    <source>
    </source>
</evidence>
<evidence type="ECO:0000269" key="24">
    <source ref="5"/>
</evidence>
<evidence type="ECO:0000305" key="25"/>
<evidence type="ECO:0000312" key="26">
    <source>
        <dbReference type="HGNC" id="HGNC:4758"/>
    </source>
</evidence>
<evidence type="ECO:0007829" key="27">
    <source>
        <dbReference type="PDB" id="7WLP"/>
    </source>
</evidence>
<keyword id="KW-0002">3D-structure</keyword>
<keyword id="KW-0007">Acetylation</keyword>
<keyword id="KW-0013">ADP-ribosylation</keyword>
<keyword id="KW-0158">Chromosome</keyword>
<keyword id="KW-0903">Direct protein sequencing</keyword>
<keyword id="KW-0238">DNA-binding</keyword>
<keyword id="KW-0325">Glycoprotein</keyword>
<keyword id="KW-0379">Hydroxylation</keyword>
<keyword id="KW-1017">Isopeptide bond</keyword>
<keyword id="KW-0488">Methylation</keyword>
<keyword id="KW-0544">Nucleosome core</keyword>
<keyword id="KW-0539">Nucleus</keyword>
<keyword id="KW-0597">Phosphoprotein</keyword>
<keyword id="KW-1185">Reference proteome</keyword>
<keyword id="KW-0832">Ubl conjugation</keyword>
<proteinExistence type="evidence at protein level"/>
<protein>
    <recommendedName>
        <fullName>Histone H2B type 1-O</fullName>
    </recommendedName>
    <alternativeName>
        <fullName evidence="26">H2B-clustered histone 17</fullName>
    </alternativeName>
    <alternativeName>
        <fullName>Histone H2B.2</fullName>
    </alternativeName>
    <alternativeName>
        <fullName>Histone H2B.n</fullName>
        <shortName>H2B/n</shortName>
    </alternativeName>
</protein>
<organism>
    <name type="scientific">Homo sapiens</name>
    <name type="common">Human</name>
    <dbReference type="NCBI Taxonomy" id="9606"/>
    <lineage>
        <taxon>Eukaryota</taxon>
        <taxon>Metazoa</taxon>
        <taxon>Chordata</taxon>
        <taxon>Craniata</taxon>
        <taxon>Vertebrata</taxon>
        <taxon>Euteleostomi</taxon>
        <taxon>Mammalia</taxon>
        <taxon>Eutheria</taxon>
        <taxon>Euarchontoglires</taxon>
        <taxon>Primates</taxon>
        <taxon>Haplorrhini</taxon>
        <taxon>Catarrhini</taxon>
        <taxon>Hominidae</taxon>
        <taxon>Homo</taxon>
    </lineage>
</organism>
<gene>
    <name evidence="26" type="primary">H2BC17</name>
    <name type="synonym">H2BFH</name>
    <name type="synonym">H2BFN</name>
    <name evidence="26" type="synonym">HIST1H2BO</name>
</gene>
<feature type="initiator methionine" description="Removed" evidence="24">
    <location>
        <position position="1"/>
    </location>
</feature>
<feature type="chain" id="PRO_0000071834" description="Histone H2B type 1-O">
    <location>
        <begin position="2"/>
        <end position="126"/>
    </location>
</feature>
<feature type="region of interest" description="Disordered" evidence="9">
    <location>
        <begin position="1"/>
        <end position="35"/>
    </location>
</feature>
<feature type="compositionally biased region" description="Low complexity" evidence="9">
    <location>
        <begin position="1"/>
        <end position="12"/>
    </location>
</feature>
<feature type="modified residue" description="N-acetylproline; partial" evidence="24">
    <location>
        <position position="2"/>
    </location>
</feature>
<feature type="modified residue" description="N6-(2-hydroxyisobutyryl)lysine; alternate" evidence="18">
    <location>
        <position position="6"/>
    </location>
</feature>
<feature type="modified residue" description="N6-(beta-hydroxybutyryl)lysine; alternate" evidence="20">
    <location>
        <position position="6"/>
    </location>
</feature>
<feature type="modified residue" description="N6-acetyllysine; alternate" evidence="11 13">
    <location>
        <position position="6"/>
    </location>
</feature>
<feature type="modified residue" description="N6-butyryllysine; alternate" evidence="19">
    <location>
        <position position="6"/>
    </location>
</feature>
<feature type="modified residue" description="N6-crotonyllysine; alternate" evidence="16">
    <location>
        <position position="6"/>
    </location>
</feature>
<feature type="modified residue" description="N6-lactoyllysine; alternate" evidence="22">
    <location>
        <position position="6"/>
    </location>
</feature>
<feature type="modified residue" description="ADP-ribosylserine" evidence="23">
    <location>
        <position position="7"/>
    </location>
</feature>
<feature type="modified residue" description="N6-(beta-hydroxybutyryl)lysine; alternate" evidence="20">
    <location>
        <position position="12"/>
    </location>
</feature>
<feature type="modified residue" description="N6-acetyllysine; alternate" evidence="13">
    <location>
        <position position="12"/>
    </location>
</feature>
<feature type="modified residue" description="N6-crotonyllysine; alternate" evidence="16">
    <location>
        <position position="12"/>
    </location>
</feature>
<feature type="modified residue" description="N6-lactoyllysine; alternate" evidence="22">
    <location>
        <position position="12"/>
    </location>
</feature>
<feature type="modified residue" description="N6-(2-hydroxyisobutyryl)lysine; alternate" evidence="18">
    <location>
        <position position="13"/>
    </location>
</feature>
<feature type="modified residue" description="N6-acetyllysine; alternate" evidence="11 13">
    <location>
        <position position="13"/>
    </location>
</feature>
<feature type="modified residue" description="N6-crotonyllysine; alternate" evidence="16">
    <location>
        <position position="13"/>
    </location>
</feature>
<feature type="modified residue" description="Phosphoserine; by STK4/MST1" evidence="10">
    <location>
        <position position="15"/>
    </location>
</feature>
<feature type="modified residue" description="N6-acetyllysine; alternate" evidence="11 13">
    <location>
        <position position="16"/>
    </location>
</feature>
<feature type="modified residue" description="N6-crotonyllysine; alternate" evidence="16">
    <location>
        <position position="16"/>
    </location>
</feature>
<feature type="modified residue" description="N6-lactoyllysine; alternate" evidence="22">
    <location>
        <position position="16"/>
    </location>
</feature>
<feature type="modified residue" description="N6-(beta-hydroxybutyryl)lysine; alternate" evidence="20">
    <location>
        <position position="17"/>
    </location>
</feature>
<feature type="modified residue" description="N6-acetyllysine; alternate" evidence="13">
    <location>
        <position position="17"/>
    </location>
</feature>
<feature type="modified residue" description="N6-crotonyllysine; alternate" evidence="16">
    <location>
        <position position="17"/>
    </location>
</feature>
<feature type="modified residue" description="N6-glutaryllysine; alternate" evidence="21">
    <location>
        <position position="17"/>
    </location>
</feature>
<feature type="modified residue" description="N6-lactoyllysine; alternate" evidence="22">
    <location>
        <position position="17"/>
    </location>
</feature>
<feature type="modified residue" description="N6-(2-hydroxyisobutyryl)lysine; alternate" evidence="18">
    <location>
        <position position="21"/>
    </location>
</feature>
<feature type="modified residue" description="N6-(beta-hydroxybutyryl)lysine; alternate" evidence="20">
    <location>
        <position position="21"/>
    </location>
</feature>
<feature type="modified residue" description="N6-acetyllysine; alternate" evidence="11 13">
    <location>
        <position position="21"/>
    </location>
</feature>
<feature type="modified residue" description="N6-butyryllysine; alternate" evidence="19">
    <location>
        <position position="21"/>
    </location>
</feature>
<feature type="modified residue" description="N6-crotonyllysine; alternate" evidence="16">
    <location>
        <position position="21"/>
    </location>
</feature>
<feature type="modified residue" description="N6-lactoyllysine; alternate" evidence="22">
    <location>
        <position position="21"/>
    </location>
</feature>
<feature type="modified residue" description="N6-(2-hydroxyisobutyryl)lysine; alternate" evidence="18">
    <location>
        <position position="24"/>
    </location>
</feature>
<feature type="modified residue" description="N6-acetyllysine; alternate" evidence="1">
    <location>
        <position position="24"/>
    </location>
</feature>
<feature type="modified residue" description="N6-crotonyllysine; alternate" evidence="16">
    <location>
        <position position="24"/>
    </location>
</feature>
<feature type="modified residue" description="N6-lactoyllysine; alternate" evidence="22">
    <location>
        <position position="24"/>
    </location>
</feature>
<feature type="modified residue" description="N6-(2-hydroxyisobutyryl)lysine" evidence="18">
    <location>
        <position position="25"/>
    </location>
</feature>
<feature type="modified residue" description="N6-(2-hydroxyisobutyryl)lysine; alternate" evidence="18">
    <location>
        <position position="35"/>
    </location>
</feature>
<feature type="modified residue" description="N6-(beta-hydroxybutyryl)lysine; alternate" evidence="20">
    <location>
        <position position="35"/>
    </location>
</feature>
<feature type="modified residue" description="N6-crotonyllysine; alternate" evidence="16">
    <location>
        <position position="35"/>
    </location>
</feature>
<feature type="modified residue" description="N6-glutaryllysine; alternate" evidence="21">
    <location>
        <position position="35"/>
    </location>
</feature>
<feature type="modified residue" description="N6-succinyllysine; alternate" evidence="17">
    <location>
        <position position="35"/>
    </location>
</feature>
<feature type="modified residue" description="PolyADP-ribosyl glutamic acid" evidence="6">
    <location>
        <position position="36"/>
    </location>
</feature>
<feature type="modified residue" description="Phosphoserine; by AMPK" evidence="6">
    <location>
        <position position="37"/>
    </location>
</feature>
<feature type="modified residue" description="N6-(2-hydroxyisobutyryl)lysine; alternate" evidence="18">
    <location>
        <position position="44"/>
    </location>
</feature>
<feature type="modified residue" description="N6-glutaryllysine; alternate" evidence="21">
    <location>
        <position position="44"/>
    </location>
</feature>
<feature type="modified residue" description="N6-lactoyllysine; alternate" evidence="22">
    <location>
        <position position="44"/>
    </location>
</feature>
<feature type="modified residue" description="N6-(2-hydroxyisobutyryl)lysine; alternate" evidence="18">
    <location>
        <position position="47"/>
    </location>
</feature>
<feature type="modified residue" description="N6-glutaryllysine; alternate" evidence="21">
    <location>
        <position position="47"/>
    </location>
</feature>
<feature type="modified residue" description="N6-methyllysine; alternate" evidence="13">
    <location>
        <position position="47"/>
    </location>
</feature>
<feature type="modified residue" description="N6,N6-dimethyllysine; alternate" evidence="13">
    <location>
        <position position="58"/>
    </location>
</feature>
<feature type="modified residue" description="N6-(2-hydroxyisobutyryl)lysine; alternate" evidence="18">
    <location>
        <position position="58"/>
    </location>
</feature>
<feature type="modified residue" description="Dimethylated arginine" evidence="8">
    <location>
        <position position="80"/>
    </location>
</feature>
<feature type="modified residue" description="N6,N6,N6-trimethyllysine; alternate" evidence="8">
    <location>
        <position position="86"/>
    </location>
</feature>
<feature type="modified residue" description="N6-(2-hydroxyisobutyryl)lysine; alternate" evidence="18">
    <location>
        <position position="86"/>
    </location>
</feature>
<feature type="modified residue" description="N6-(beta-hydroxybutyryl)lysine; alternate" evidence="20">
    <location>
        <position position="86"/>
    </location>
</feature>
<feature type="modified residue" description="N6-acetyllysine; alternate" evidence="8">
    <location>
        <position position="86"/>
    </location>
</feature>
<feature type="modified residue" description="N6-lactoyllysine; alternate" evidence="22">
    <location>
        <position position="86"/>
    </location>
</feature>
<feature type="modified residue" description="Omega-N-methylarginine" evidence="8">
    <location>
        <position position="87"/>
    </location>
</feature>
<feature type="modified residue" description="Omega-N-methylarginine" evidence="8">
    <location>
        <position position="93"/>
    </location>
</feature>
<feature type="modified residue" description="N6-(2-hydroxyisobutyryl)lysine; alternate" evidence="18">
    <location>
        <position position="109"/>
    </location>
</feature>
<feature type="modified residue" description="N6-glutaryllysine; alternate" evidence="21">
    <location>
        <position position="109"/>
    </location>
</feature>
<feature type="modified residue" description="N6-lactoyllysine; alternate" evidence="22">
    <location>
        <position position="109"/>
    </location>
</feature>
<feature type="modified residue" description="N6-methyllysine; alternate" evidence="13">
    <location>
        <position position="109"/>
    </location>
</feature>
<feature type="modified residue" description="Phosphothreonine" evidence="4">
    <location>
        <position position="116"/>
    </location>
</feature>
<feature type="modified residue" description="N6-(2-hydroxyisobutyryl)lysine; alternate" evidence="18">
    <location>
        <position position="117"/>
    </location>
</feature>
<feature type="modified residue" description="N6-(beta-hydroxybutyryl)lysine; alternate" evidence="20">
    <location>
        <position position="117"/>
    </location>
</feature>
<feature type="modified residue" description="N6-glutaryllysine; alternate" evidence="21">
    <location>
        <position position="117"/>
    </location>
</feature>
<feature type="modified residue" description="N6-lactoyllysine; alternate" evidence="22">
    <location>
        <position position="117"/>
    </location>
</feature>
<feature type="modified residue" description="N6-malonyllysine; alternate" evidence="17">
    <location>
        <position position="117"/>
    </location>
</feature>
<feature type="modified residue" description="N6-methylated lysine; alternate" evidence="4">
    <location>
        <position position="117"/>
    </location>
</feature>
<feature type="modified residue" description="N6-succinyllysine; alternate" evidence="17">
    <location>
        <position position="117"/>
    </location>
</feature>
<feature type="modified residue" description="N6-(2-hydroxyisobutyryl)lysine; alternate" evidence="18">
    <location>
        <position position="121"/>
    </location>
</feature>
<feature type="modified residue" description="N6-(beta-hydroxybutyryl)lysine; alternate" evidence="20">
    <location>
        <position position="121"/>
    </location>
</feature>
<feature type="modified residue" description="N6-glutaryllysine; alternate" evidence="21">
    <location>
        <position position="121"/>
    </location>
</feature>
<feature type="modified residue" description="N6-lactoyllysine; alternate" evidence="22">
    <location>
        <position position="121"/>
    </location>
</feature>
<feature type="modified residue" description="N6-succinyllysine; alternate" evidence="17">
    <location>
        <position position="121"/>
    </location>
</feature>
<feature type="glycosylation site" description="O-linked (GlcNAc) serine" evidence="3">
    <location>
        <position position="113"/>
    </location>
</feature>
<feature type="cross-link" description="Glycyl lysine isopeptide (Lys-Gly) (interchain with G-Cter in SUMO2); alternate" evidence="2">
    <location>
        <position position="6"/>
    </location>
</feature>
<feature type="cross-link" description="Glycyl lysine isopeptide (Lys-Gly) (interchain with G-Cter in SUMO2); alternate" evidence="5">
    <location>
        <position position="21"/>
    </location>
</feature>
<feature type="cross-link" description="Glycyl lysine isopeptide (Lys-Gly) (interchain with G-Cter in ubiquitin); alternate" evidence="15">
    <location>
        <position position="35"/>
    </location>
</feature>
<feature type="cross-link" description="Glycyl lysine isopeptide (Lys-Gly) (interchain with G-Cter in ubiquitin); alternate" evidence="12 13 14">
    <location>
        <position position="121"/>
    </location>
</feature>
<feature type="sequence conflict" description="In Ref. 1; CAA40416." evidence="25" ref="1">
    <original>K</original>
    <variation>E</variation>
    <location>
        <position position="29"/>
    </location>
</feature>
<feature type="helix" evidence="27">
    <location>
        <begin position="39"/>
        <end position="49"/>
    </location>
</feature>
<feature type="strand" evidence="27">
    <location>
        <begin position="54"/>
        <end position="56"/>
    </location>
</feature>
<feature type="helix" evidence="27">
    <location>
        <begin position="57"/>
        <end position="84"/>
    </location>
</feature>
<feature type="strand" evidence="27">
    <location>
        <begin position="88"/>
        <end position="90"/>
    </location>
</feature>
<feature type="helix" evidence="27">
    <location>
        <begin position="92"/>
        <end position="102"/>
    </location>
</feature>
<feature type="helix" evidence="27">
    <location>
        <begin position="105"/>
        <end position="123"/>
    </location>
</feature>
<dbReference type="EMBL" id="X57138">
    <property type="protein sequence ID" value="CAA40416.1"/>
    <property type="molecule type" value="Genomic_DNA"/>
</dbReference>
<dbReference type="EMBL" id="AF531298">
    <property type="protein sequence ID" value="AAN06698.1"/>
    <property type="molecule type" value="Genomic_DNA"/>
</dbReference>
<dbReference type="EMBL" id="Z98744">
    <property type="status" value="NOT_ANNOTATED_CDS"/>
    <property type="molecule type" value="Genomic_DNA"/>
</dbReference>
<dbReference type="EMBL" id="BC106720">
    <property type="protein sequence ID" value="AAI06721.1"/>
    <property type="molecule type" value="mRNA"/>
</dbReference>
<dbReference type="CCDS" id="CCDS4640.1"/>
<dbReference type="PIR" id="A56624">
    <property type="entry name" value="A56624"/>
</dbReference>
<dbReference type="RefSeq" id="NP_003518.2">
    <property type="nucleotide sequence ID" value="NM_003527.4"/>
</dbReference>
<dbReference type="PDB" id="7WLP">
    <property type="method" value="X-ray"/>
    <property type="resolution" value="2.29 A"/>
    <property type="chains" value="A=34-126"/>
</dbReference>
<dbReference type="PDBsum" id="7WLP"/>
<dbReference type="SMR" id="P23527"/>
<dbReference type="BioGRID" id="113944">
    <property type="interactions" value="151"/>
</dbReference>
<dbReference type="FunCoup" id="P23527">
    <property type="interactions" value="1415"/>
</dbReference>
<dbReference type="IntAct" id="P23527">
    <property type="interactions" value="31"/>
</dbReference>
<dbReference type="MINT" id="P23527"/>
<dbReference type="STRING" id="9606.ENSP00000477527"/>
<dbReference type="GlyCosmos" id="P23527">
    <property type="glycosylation" value="1 site, No reported glycans"/>
</dbReference>
<dbReference type="GlyGen" id="P23527">
    <property type="glycosylation" value="5 sites, 1 O-linked glycan (4 sites)"/>
</dbReference>
<dbReference type="iPTMnet" id="P23527"/>
<dbReference type="PhosphoSitePlus" id="P23527"/>
<dbReference type="SwissPalm" id="P23527"/>
<dbReference type="BioMuta" id="HIST1H2BO"/>
<dbReference type="DMDM" id="51338764"/>
<dbReference type="jPOST" id="P23527"/>
<dbReference type="MassIVE" id="P23527"/>
<dbReference type="PaxDb" id="9606-ENSP00000477527"/>
<dbReference type="PeptideAtlas" id="P23527"/>
<dbReference type="Pumba" id="P23527"/>
<dbReference type="TopDownProteomics" id="P23527"/>
<dbReference type="Antibodypedia" id="73099">
    <property type="antibodies" value="70 antibodies from 10 providers"/>
</dbReference>
<dbReference type="DNASU" id="8348"/>
<dbReference type="Ensembl" id="ENST00000616182.2">
    <property type="protein sequence ID" value="ENSP00000477527.2"/>
    <property type="gene ID" value="ENSG00000274641.2"/>
</dbReference>
<dbReference type="GeneID" id="8348"/>
<dbReference type="KEGG" id="hsa:8348"/>
<dbReference type="MANE-Select" id="ENST00000616182.2">
    <property type="protein sequence ID" value="ENSP00000477527.2"/>
    <property type="RefSeq nucleotide sequence ID" value="NM_003527.4"/>
    <property type="RefSeq protein sequence ID" value="NP_003518.2"/>
</dbReference>
<dbReference type="UCSC" id="uc003nkc.2">
    <property type="organism name" value="human"/>
</dbReference>
<dbReference type="AGR" id="HGNC:4758"/>
<dbReference type="CTD" id="8348"/>
<dbReference type="DisGeNET" id="8348"/>
<dbReference type="GeneCards" id="H2BC17"/>
<dbReference type="HGNC" id="HGNC:4758">
    <property type="gene designation" value="H2BC17"/>
</dbReference>
<dbReference type="HPA" id="ENSG00000274641">
    <property type="expression patterns" value="Tissue enhanced (bone marrow, lymphoid tissue)"/>
</dbReference>
<dbReference type="MalaCards" id="H2BC17"/>
<dbReference type="MIM" id="602808">
    <property type="type" value="gene"/>
</dbReference>
<dbReference type="neXtProt" id="NX_P23527"/>
<dbReference type="OpenTargets" id="ENSG00000274641"/>
<dbReference type="VEuPathDB" id="HostDB:ENSG00000274641"/>
<dbReference type="eggNOG" id="KOG1744">
    <property type="taxonomic scope" value="Eukaryota"/>
</dbReference>
<dbReference type="GeneTree" id="ENSGT01110000267152"/>
<dbReference type="HOGENOM" id="CLU_075666_2_1_1"/>
<dbReference type="InParanoid" id="P23527"/>
<dbReference type="OMA" id="AQLCQTT"/>
<dbReference type="OrthoDB" id="9537006at2759"/>
<dbReference type="PAN-GO" id="P23527">
    <property type="GO annotations" value="2 GO annotations based on evolutionary models"/>
</dbReference>
<dbReference type="PhylomeDB" id="P23527"/>
<dbReference type="TreeFam" id="TF300212"/>
<dbReference type="PathwayCommons" id="P23527"/>
<dbReference type="Reactome" id="R-HSA-110328">
    <property type="pathway name" value="Recognition and association of DNA glycosylase with site containing an affected pyrimidine"/>
</dbReference>
<dbReference type="Reactome" id="R-HSA-110329">
    <property type="pathway name" value="Cleavage of the damaged pyrimidine"/>
</dbReference>
<dbReference type="Reactome" id="R-HSA-110330">
    <property type="pathway name" value="Recognition and association of DNA glycosylase with site containing an affected purine"/>
</dbReference>
<dbReference type="Reactome" id="R-HSA-110331">
    <property type="pathway name" value="Cleavage of the damaged purine"/>
</dbReference>
<dbReference type="Reactome" id="R-HSA-1221632">
    <property type="pathway name" value="Meiotic synapsis"/>
</dbReference>
<dbReference type="Reactome" id="R-HSA-171306">
    <property type="pathway name" value="Packaging Of Telomere Ends"/>
</dbReference>
<dbReference type="Reactome" id="R-HSA-1912408">
    <property type="pathway name" value="Pre-NOTCH Transcription and Translation"/>
</dbReference>
<dbReference type="Reactome" id="R-HSA-201722">
    <property type="pathway name" value="Formation of the beta-catenin:TCF transactivating complex"/>
</dbReference>
<dbReference type="Reactome" id="R-HSA-212300">
    <property type="pathway name" value="PRC2 methylates histones and DNA"/>
</dbReference>
<dbReference type="Reactome" id="R-HSA-2299718">
    <property type="pathway name" value="Condensation of Prophase Chromosomes"/>
</dbReference>
<dbReference type="Reactome" id="R-HSA-2559580">
    <property type="pathway name" value="Oxidative Stress Induced Senescence"/>
</dbReference>
<dbReference type="Reactome" id="R-HSA-2559582">
    <property type="pathway name" value="Senescence-Associated Secretory Phenotype (SASP)"/>
</dbReference>
<dbReference type="Reactome" id="R-HSA-2559586">
    <property type="pathway name" value="DNA Damage/Telomere Stress Induced Senescence"/>
</dbReference>
<dbReference type="Reactome" id="R-HSA-3214815">
    <property type="pathway name" value="HDACs deacetylate histones"/>
</dbReference>
<dbReference type="Reactome" id="R-HSA-3214847">
    <property type="pathway name" value="HATs acetylate histones"/>
</dbReference>
<dbReference type="Reactome" id="R-HSA-427359">
    <property type="pathway name" value="SIRT1 negatively regulates rRNA expression"/>
</dbReference>
<dbReference type="Reactome" id="R-HSA-427389">
    <property type="pathway name" value="ERCC6 (CSB) and EHMT2 (G9a) positively regulate rRNA expression"/>
</dbReference>
<dbReference type="Reactome" id="R-HSA-427413">
    <property type="pathway name" value="NoRC negatively regulates rRNA expression"/>
</dbReference>
<dbReference type="Reactome" id="R-HSA-5250924">
    <property type="pathway name" value="B-WICH complex positively regulates rRNA expression"/>
</dbReference>
<dbReference type="Reactome" id="R-HSA-5334118">
    <property type="pathway name" value="DNA methylation"/>
</dbReference>
<dbReference type="Reactome" id="R-HSA-5578749">
    <property type="pathway name" value="Transcriptional regulation by small RNAs"/>
</dbReference>
<dbReference type="Reactome" id="R-HSA-5617472">
    <property type="pathway name" value="Activation of anterior HOX genes in hindbrain development during early embryogenesis"/>
</dbReference>
<dbReference type="Reactome" id="R-HSA-5625886">
    <property type="pathway name" value="Activated PKN1 stimulates transcription of AR (androgen receptor) regulated genes KLK2 and KLK3"/>
</dbReference>
<dbReference type="Reactome" id="R-HSA-5689880">
    <property type="pathway name" value="Ub-specific processing proteases"/>
</dbReference>
<dbReference type="Reactome" id="R-HSA-5693565">
    <property type="pathway name" value="Recruitment and ATM-mediated phosphorylation of repair and signaling proteins at DNA double strand breaks"/>
</dbReference>
<dbReference type="Reactome" id="R-HSA-5693571">
    <property type="pathway name" value="Nonhomologous End-Joining (NHEJ)"/>
</dbReference>
<dbReference type="Reactome" id="R-HSA-5693607">
    <property type="pathway name" value="Processing of DNA double-strand break ends"/>
</dbReference>
<dbReference type="Reactome" id="R-HSA-606279">
    <property type="pathway name" value="Deposition of new CENPA-containing nucleosomes at the centromere"/>
</dbReference>
<dbReference type="Reactome" id="R-HSA-68616">
    <property type="pathway name" value="Assembly of the ORC complex at the origin of replication"/>
</dbReference>
<dbReference type="Reactome" id="R-HSA-69473">
    <property type="pathway name" value="G2/M DNA damage checkpoint"/>
</dbReference>
<dbReference type="Reactome" id="R-HSA-73728">
    <property type="pathway name" value="RNA Polymerase I Promoter Opening"/>
</dbReference>
<dbReference type="Reactome" id="R-HSA-73772">
    <property type="pathway name" value="RNA Polymerase I Promoter Escape"/>
</dbReference>
<dbReference type="Reactome" id="R-HSA-8866654">
    <property type="pathway name" value="E3 ubiquitin ligases ubiquitinate target proteins"/>
</dbReference>
<dbReference type="Reactome" id="R-HSA-8936459">
    <property type="pathway name" value="RUNX1 regulates genes involved in megakaryocyte differentiation and platelet function"/>
</dbReference>
<dbReference type="Reactome" id="R-HSA-8939236">
    <property type="pathway name" value="RUNX1 regulates transcription of genes involved in differentiation of HSCs"/>
</dbReference>
<dbReference type="Reactome" id="R-HSA-9018519">
    <property type="pathway name" value="Estrogen-dependent gene expression"/>
</dbReference>
<dbReference type="Reactome" id="R-HSA-912446">
    <property type="pathway name" value="Meiotic recombination"/>
</dbReference>
<dbReference type="Reactome" id="R-HSA-9609690">
    <property type="pathway name" value="HCMV Early Events"/>
</dbReference>
<dbReference type="Reactome" id="R-HSA-9610379">
    <property type="pathway name" value="HCMV Late Events"/>
</dbReference>
<dbReference type="Reactome" id="R-HSA-9616222">
    <property type="pathway name" value="Transcriptional regulation of granulopoiesis"/>
</dbReference>
<dbReference type="Reactome" id="R-HSA-9670095">
    <property type="pathway name" value="Inhibition of DNA recombination at telomere"/>
</dbReference>
<dbReference type="Reactome" id="R-HSA-9710421">
    <property type="pathway name" value="Defective pyroptosis"/>
</dbReference>
<dbReference type="Reactome" id="R-HSA-977225">
    <property type="pathway name" value="Amyloid fiber formation"/>
</dbReference>
<dbReference type="Reactome" id="R-HSA-9821002">
    <property type="pathway name" value="Chromatin modifications during the maternal to zygotic transition (MZT)"/>
</dbReference>
<dbReference type="Reactome" id="R-HSA-9821993">
    <property type="pathway name" value="Replacement of protamines by nucleosomes in the male pronucleus"/>
</dbReference>
<dbReference type="Reactome" id="R-HSA-9841922">
    <property type="pathway name" value="MLL4 and MLL3 complexes regulate expression of PPARG target genes in adipogenesis and hepatic steatosis"/>
</dbReference>
<dbReference type="Reactome" id="R-HSA-9843940">
    <property type="pathway name" value="Regulation of endogenous retroelements by KRAB-ZFP proteins"/>
</dbReference>
<dbReference type="Reactome" id="R-HSA-9843970">
    <property type="pathway name" value="Regulation of endogenous retroelements by the Human Silencing Hub (HUSH) complex"/>
</dbReference>
<dbReference type="Reactome" id="R-HSA-9845323">
    <property type="pathway name" value="Regulation of endogenous retroelements by Piwi-interacting RNAs (piRNAs)"/>
</dbReference>
<dbReference type="SignaLink" id="P23527"/>
<dbReference type="SIGNOR" id="P23527"/>
<dbReference type="BioGRID-ORCS" id="8348">
    <property type="hits" value="83 hits in 1123 CRISPR screens"/>
</dbReference>
<dbReference type="CD-CODE" id="91857CE7">
    <property type="entry name" value="Nucleolus"/>
</dbReference>
<dbReference type="GeneWiki" id="HIST1H2BO"/>
<dbReference type="GenomeRNAi" id="8348"/>
<dbReference type="Pharos" id="P23527">
    <property type="development level" value="Tdark"/>
</dbReference>
<dbReference type="PRO" id="PR:P23527"/>
<dbReference type="Proteomes" id="UP000005640">
    <property type="component" value="Chromosome 6"/>
</dbReference>
<dbReference type="RNAct" id="P23527">
    <property type="molecule type" value="protein"/>
</dbReference>
<dbReference type="Bgee" id="ENSG00000274641">
    <property type="expression patterns" value="Expressed in bone marrow cell and 111 other cell types or tissues"/>
</dbReference>
<dbReference type="GO" id="GO:0005829">
    <property type="term" value="C:cytosol"/>
    <property type="evidence" value="ECO:0000314"/>
    <property type="project" value="HPA"/>
</dbReference>
<dbReference type="GO" id="GO:0005654">
    <property type="term" value="C:nucleoplasm"/>
    <property type="evidence" value="ECO:0000314"/>
    <property type="project" value="HPA"/>
</dbReference>
<dbReference type="GO" id="GO:0000786">
    <property type="term" value="C:nucleosome"/>
    <property type="evidence" value="ECO:0000303"/>
    <property type="project" value="UniProtKB"/>
</dbReference>
<dbReference type="GO" id="GO:0005634">
    <property type="term" value="C:nucleus"/>
    <property type="evidence" value="ECO:0000314"/>
    <property type="project" value="UniProtKB"/>
</dbReference>
<dbReference type="GO" id="GO:0003677">
    <property type="term" value="F:DNA binding"/>
    <property type="evidence" value="ECO:0000303"/>
    <property type="project" value="UniProtKB"/>
</dbReference>
<dbReference type="GO" id="GO:0046982">
    <property type="term" value="F:protein heterodimerization activity"/>
    <property type="evidence" value="ECO:0007669"/>
    <property type="project" value="InterPro"/>
</dbReference>
<dbReference type="GO" id="GO:0030527">
    <property type="term" value="F:structural constituent of chromatin"/>
    <property type="evidence" value="ECO:0007669"/>
    <property type="project" value="InterPro"/>
</dbReference>
<dbReference type="GO" id="GO:0006334">
    <property type="term" value="P:nucleosome assembly"/>
    <property type="evidence" value="ECO:0000303"/>
    <property type="project" value="UniProtKB"/>
</dbReference>
<dbReference type="CDD" id="cd22910">
    <property type="entry name" value="HFD_H2B"/>
    <property type="match status" value="1"/>
</dbReference>
<dbReference type="FunFam" id="1.10.20.10:FF:000003">
    <property type="entry name" value="Histone H2B"/>
    <property type="match status" value="1"/>
</dbReference>
<dbReference type="Gene3D" id="1.10.20.10">
    <property type="entry name" value="Histone, subunit A"/>
    <property type="match status" value="1"/>
</dbReference>
<dbReference type="InterPro" id="IPR009072">
    <property type="entry name" value="Histone-fold"/>
</dbReference>
<dbReference type="InterPro" id="IPR007125">
    <property type="entry name" value="Histone_H2A/H2B/H3"/>
</dbReference>
<dbReference type="InterPro" id="IPR000558">
    <property type="entry name" value="Histone_H2B"/>
</dbReference>
<dbReference type="InterPro" id="IPR055333">
    <property type="entry name" value="HISTONE_H2B_site"/>
</dbReference>
<dbReference type="PANTHER" id="PTHR23428">
    <property type="entry name" value="HISTONE H2B"/>
    <property type="match status" value="1"/>
</dbReference>
<dbReference type="Pfam" id="PF00125">
    <property type="entry name" value="Histone"/>
    <property type="match status" value="1"/>
</dbReference>
<dbReference type="PRINTS" id="PR00621">
    <property type="entry name" value="HISTONEH2B"/>
</dbReference>
<dbReference type="SMART" id="SM00427">
    <property type="entry name" value="H2B"/>
    <property type="match status" value="1"/>
</dbReference>
<dbReference type="SUPFAM" id="SSF47113">
    <property type="entry name" value="Histone-fold"/>
    <property type="match status" value="1"/>
</dbReference>
<dbReference type="PROSITE" id="PS00357">
    <property type="entry name" value="HISTONE_H2B"/>
    <property type="match status" value="1"/>
</dbReference>
<sequence>MPDPAKSAPAPKKGSKKAVTKAQKKDGKKRKRSRKESYSIYVYKVLKQVHPDTGISSKAMGIMNSFVNDIFERIAGEASRLAHYNKRSTITSREIQTAVRLLLPGELAKHAVSEGTKAVTKYTSSK</sequence>
<name>H2B1O_HUMAN</name>
<comment type="function">
    <text>Core component of nucleosome. Nucleosomes wrap and compact DNA into chromatin, limiting DNA accessibility to the cellular machineries which require DNA as a template. Histones thereby play a central role in transcription regulation, DNA repair, DNA replication and chromosomal stability. DNA accessibility is regulated via a complex set of post-translational modifications of histones, also called histone code, and nucleosome remodeling.</text>
</comment>
<comment type="subunit">
    <text>The nucleosome is a histone octamer containing two molecules each of H2A, H2B, H3 and H4 assembled in one H3-H4 heterotetramer and two H2A-H2B heterodimers. The octamer wraps approximately 147 bp of DNA.</text>
</comment>
<comment type="interaction">
    <interactant intactId="EBI-1642161">
        <id>P23527</id>
    </interactant>
    <interactant intactId="EBI-12012016">
        <id>Q9Y5F1</id>
        <label>PCDHB12</label>
    </interactant>
    <organismsDiffer>false</organismsDiffer>
    <experiments>3</experiments>
</comment>
<comment type="subcellular location">
    <subcellularLocation>
        <location>Nucleus</location>
    </subcellularLocation>
    <subcellularLocation>
        <location>Chromosome</location>
    </subcellularLocation>
</comment>
<comment type="PTM">
    <text evidence="13">Monoubiquitination at Lys-35 (H2BK34Ub) by the MSL1/MSL2 dimer is required for histone H3 'Lys-4' (H3K4me) and 'Lys-79' (H3K79me) methylation and transcription activation at specific gene loci, such as HOXA9 and MEIS1 loci. Similarly, monoubiquitination at Lys-121 (H2BK120Ub) by the RNF20/40 complex gives a specific tag for epigenetic transcriptional activation and is also prerequisite for histone H3 'Lys-4' and 'Lys-79' methylation. It also functions cooperatively with the FACT dimer to stimulate elongation by RNA polymerase II. H2BK120Ub also acts as a regulator of mRNA splicing: deubiquitination by USP49 is required for efficient cotranscriptional splicing of a large set of exons.</text>
</comment>
<comment type="PTM">
    <text evidence="6 10">Phosphorylation at Ser-37 (H2BS36ph) by AMPK in response to stress promotes transcription (By similarity). Phosphorylated on Ser-15 (H2BS14ph) by STK4/MST1 during apoptosis; which facilitates apoptotic chromatin condensation (PubMed:12757711). Also phosphorylated on Ser-15 in response to DNA double strand breaks (DSBs), and in correlation with somatic hypermutation and immunoglobulin class-switch recombination.</text>
</comment>
<comment type="PTM">
    <text evidence="3">GlcNAcylation at Ser-113 promotes monoubiquitination of Lys-121. It fluctuates in response to extracellular glucose, and associates with transcribed genes (By similarity).</text>
</comment>
<comment type="PTM">
    <text evidence="7 23">ADP-ribosylated by PARP1 or PARP2 on Ser-7 (H2BS6ADPr) in response to DNA damage (PubMed:34874266). H2BS6ADPr promotes recruitment of CHD1L (PubMed:34874266). Poly ADP-ribosylation on Glu-36 (H2BE35ADPr) by PARP1 regulates adipogenesis: it inhibits phosphorylation at Ser-37 (H2BS36ph), thereby blocking expression of pro-adipogenetic genes (By similarity).</text>
</comment>
<comment type="PTM">
    <text evidence="16">Crotonylation (Kcr) is specifically present in male germ cells and marks testis-specific genes in post-meiotic cells, including X-linked genes that escape sex chromosome inactivation in haploid cells. Crotonylation marks active promoters and enhancers and confers resistance to transcriptional repressors. It is also associated with post-meiotically activated genes on autosomes.</text>
</comment>
<comment type="PTM">
    <text evidence="22">Lactylated in macrophages by EP300/P300 by using lactoyl-CoA directly derived from endogenous or exogenous lactate, leading to stimulates gene transcription.</text>
</comment>
<comment type="miscellaneous">
    <text>The mouse orthologous protein seems not to exist.</text>
</comment>
<comment type="similarity">
    <text evidence="25">Belongs to the histone H2B family.</text>
</comment>